<organism>
    <name type="scientific">Saccharolobus shibatae (strain ATCC 51178 / DSM 5389 / JCM 8931 / NBRC 15437 / B12)</name>
    <name type="common">Sulfolobus shibatae</name>
    <dbReference type="NCBI Taxonomy" id="523848"/>
    <lineage>
        <taxon>Archaea</taxon>
        <taxon>Thermoproteota</taxon>
        <taxon>Thermoprotei</taxon>
        <taxon>Sulfolobales</taxon>
        <taxon>Sulfolobaceae</taxon>
        <taxon>Saccharolobus</taxon>
    </lineage>
</organism>
<evidence type="ECO:0000255" key="1">
    <source>
        <dbReference type="HAMAP-Rule" id="MF_00865"/>
    </source>
</evidence>
<evidence type="ECO:0000269" key="2">
    <source>
    </source>
</evidence>
<evidence type="ECO:0000269" key="3">
    <source>
    </source>
</evidence>
<evidence type="ECO:0000269" key="4">
    <source>
    </source>
</evidence>
<evidence type="ECO:0000303" key="5">
    <source>
    </source>
</evidence>
<evidence type="ECO:0000305" key="6">
    <source>
    </source>
</evidence>
<evidence type="ECO:0000305" key="7">
    <source>
    </source>
</evidence>
<evidence type="ECO:0000305" key="8">
    <source>
    </source>
</evidence>
<evidence type="ECO:0000312" key="9">
    <source>
        <dbReference type="EMBL" id="QXJ30131.1"/>
    </source>
</evidence>
<evidence type="ECO:0007744" key="10">
    <source>
        <dbReference type="PDB" id="2WB1"/>
    </source>
</evidence>
<evidence type="ECO:0007744" key="11">
    <source>
        <dbReference type="PDB" id="2Y0S"/>
    </source>
</evidence>
<evidence type="ECO:0007744" key="12">
    <source>
        <dbReference type="PDB" id="4AYB"/>
    </source>
</evidence>
<evidence type="ECO:0007744" key="13">
    <source>
        <dbReference type="PDB" id="4V8S"/>
    </source>
</evidence>
<evidence type="ECO:0007829" key="14">
    <source>
        <dbReference type="PDB" id="4AYB"/>
    </source>
</evidence>
<gene>
    <name evidence="1 5" type="primary">rpo7</name>
    <name evidence="1" type="synonym">rpoE</name>
    <name evidence="9" type="ORF">J5U23_03022</name>
</gene>
<accession>B8YB57</accession>
<accession>A0A8F5BRR6</accession>
<reference evidence="10" key="1">
    <citation type="journal article" date="2009" name="PLoS Biol.">
        <title>Evolution of complex RNA polymerases: the complete archaeal RNA polymerase structure.</title>
        <authorList>
            <person name="Korkhin Y."/>
            <person name="Unligil U.M."/>
            <person name="Littlefield O."/>
            <person name="Nelson P.J."/>
            <person name="Stuart D.I."/>
            <person name="Sigler P.B."/>
            <person name="Bell S.D."/>
            <person name="Abrescia N.G."/>
        </authorList>
    </citation>
    <scope>NUCLEOTIDE SEQUENCE [GENOMIC DNA]</scope>
    <scope>X-RAY CRYSTALLOGRAPHY (3.52 ANGSTROMS) OF THE RNA POLYMERASE COMPLEX</scope>
    <scope>FUNCTION</scope>
    <scope>SUBUNIT</scope>
    <scope>DOMAIN</scope>
    <scope>NOMENCLATURE</scope>
    <source>
        <strain>ATCC 51178 / DSM 5389 / JCM 8931 / NBRC 15437 / B12</strain>
    </source>
</reference>
<reference evidence="9" key="2">
    <citation type="journal article" date="2021" name="Environ. Microbiol.">
        <title>New insights into the diversity and evolution of the archaeal mobilome from three complete genomes of Saccharolobus shibatae.</title>
        <authorList>
            <person name="Medvedeva S."/>
            <person name="Brandt D."/>
            <person name="Cvirkaite-Krupovic V."/>
            <person name="Liu Y."/>
            <person name="Severinov K."/>
            <person name="Ishino S."/>
            <person name="Ishino Y."/>
            <person name="Prangishvili D."/>
            <person name="Kalinowski J."/>
            <person name="Krupovic M."/>
        </authorList>
    </citation>
    <scope>NUCLEOTIDE SEQUENCE [LARGE SCALE GENOMIC DNA]</scope>
    <source>
        <strain>ATCC 51178 / DSM 5389 / JCM 8931 / NBRC 15437 / B12</strain>
    </source>
</reference>
<reference evidence="11" key="3">
    <citation type="journal article" date="2011" name="Biochem. Soc. Trans.">
        <title>Archaeal RNA polymerase: the influence of the protruding stalk in crystal packing and preliminary biophysical analysis of the Rpo13 subunit.</title>
        <authorList>
            <person name="Wojtas M."/>
            <person name="Peralta B."/>
            <person name="Ondiviela M."/>
            <person name="Mogni M."/>
            <person name="Bell S.D."/>
            <person name="Abrescia N.G."/>
        </authorList>
    </citation>
    <scope>X-RAY CRYSTALLOGRAPHY (3.80 ANGSTROMS) OF THE RNA POLYMERASE COMPLEX</scope>
    <scope>FUNCTION</scope>
    <scope>SUBUNIT</scope>
    <scope>DOMAIN</scope>
    <source>
        <strain>ATCC 51178 / DSM 5389 / JCM 8931 / NBRC 15437 / B12</strain>
    </source>
</reference>
<reference evidence="12 13" key="4">
    <citation type="journal article" date="2012" name="Nucleic Acids Res.">
        <title>Structural and functional analyses of the interaction of archaeal RNA polymerase with DNA.</title>
        <authorList>
            <person name="Wojtas M.N."/>
            <person name="Mogni M."/>
            <person name="Millet O."/>
            <person name="Bell S.D."/>
            <person name="Abrescia N.G."/>
        </authorList>
    </citation>
    <scope>X-RAY CRYSTALLOGRAPHY (3.20 ANGSTROMS) OF THE RNA POLYMERASE COMPLEX</scope>
    <scope>FUNCTION</scope>
    <scope>SUBUNIT</scope>
    <scope>DOMAIN</scope>
    <source>
        <strain>ATCC 51178 / DSM 5389 / JCM 8931 / NBRC 15437 / B12</strain>
    </source>
</reference>
<proteinExistence type="evidence at protein level"/>
<keyword id="KW-0002">3D-structure</keyword>
<keyword id="KW-0963">Cytoplasm</keyword>
<keyword id="KW-0240">DNA-directed RNA polymerase</keyword>
<keyword id="KW-0548">Nucleotidyltransferase</keyword>
<keyword id="KW-0804">Transcription</keyword>
<keyword id="KW-0808">Transferase</keyword>
<name>RPO7_SACSH</name>
<dbReference type="EC" id="2.7.7.6" evidence="1"/>
<dbReference type="EMBL" id="FJ515669">
    <property type="protein sequence ID" value="ACL36492.1"/>
    <property type="molecule type" value="Genomic_DNA"/>
</dbReference>
<dbReference type="EMBL" id="CP077717">
    <property type="protein sequence ID" value="QXJ30131.1"/>
    <property type="molecule type" value="Genomic_DNA"/>
</dbReference>
<dbReference type="RefSeq" id="WP_218266505.1">
    <property type="nucleotide sequence ID" value="NZ_CP077717.1"/>
</dbReference>
<dbReference type="PDB" id="2WAQ">
    <property type="method" value="X-ray"/>
    <property type="resolution" value="3.35 A"/>
    <property type="chains" value="E=1-180"/>
</dbReference>
<dbReference type="PDB" id="2WB1">
    <property type="method" value="X-ray"/>
    <property type="resolution" value="3.52 A"/>
    <property type="chains" value="E/T=1-177"/>
</dbReference>
<dbReference type="PDB" id="2Y0S">
    <property type="method" value="X-ray"/>
    <property type="resolution" value="3.80 A"/>
    <property type="chains" value="E/T=1-180"/>
</dbReference>
<dbReference type="PDB" id="4AYB">
    <property type="method" value="X-ray"/>
    <property type="resolution" value="3.20 A"/>
    <property type="chains" value="E=1-180"/>
</dbReference>
<dbReference type="PDB" id="4V8S">
    <property type="method" value="X-ray"/>
    <property type="resolution" value="4.32 A"/>
    <property type="chains" value="AT/BE=1-180"/>
</dbReference>
<dbReference type="PDBsum" id="2WAQ"/>
<dbReference type="PDBsum" id="2WB1"/>
<dbReference type="PDBsum" id="2Y0S"/>
<dbReference type="PDBsum" id="4AYB"/>
<dbReference type="PDBsum" id="4V8S"/>
<dbReference type="SMR" id="B8YB57"/>
<dbReference type="GeneID" id="65564495"/>
<dbReference type="KEGG" id="sshi:J5U23_03022"/>
<dbReference type="OrthoDB" id="7927at2157"/>
<dbReference type="BRENDA" id="2.7.7.6">
    <property type="organism ID" value="6162"/>
</dbReference>
<dbReference type="EvolutionaryTrace" id="B8YB57"/>
<dbReference type="Proteomes" id="UP000694018">
    <property type="component" value="Chromosome"/>
</dbReference>
<dbReference type="GO" id="GO:0005737">
    <property type="term" value="C:cytoplasm"/>
    <property type="evidence" value="ECO:0007669"/>
    <property type="project" value="UniProtKB-SubCell"/>
</dbReference>
<dbReference type="GO" id="GO:0000428">
    <property type="term" value="C:DNA-directed RNA polymerase complex"/>
    <property type="evidence" value="ECO:0000314"/>
    <property type="project" value="UniProtKB"/>
</dbReference>
<dbReference type="GO" id="GO:0003677">
    <property type="term" value="F:DNA binding"/>
    <property type="evidence" value="ECO:0007669"/>
    <property type="project" value="InterPro"/>
</dbReference>
<dbReference type="GO" id="GO:0003899">
    <property type="term" value="F:DNA-directed RNA polymerase activity"/>
    <property type="evidence" value="ECO:0007669"/>
    <property type="project" value="UniProtKB-UniRule"/>
</dbReference>
<dbReference type="GO" id="GO:0006352">
    <property type="term" value="P:DNA-templated transcription initiation"/>
    <property type="evidence" value="ECO:0007669"/>
    <property type="project" value="InterPro"/>
</dbReference>
<dbReference type="CDD" id="cd04331">
    <property type="entry name" value="RNAP_E_N"/>
    <property type="match status" value="1"/>
</dbReference>
<dbReference type="CDD" id="cd04460">
    <property type="entry name" value="S1_RpoE"/>
    <property type="match status" value="1"/>
</dbReference>
<dbReference type="Gene3D" id="2.40.50.140">
    <property type="entry name" value="Nucleic acid-binding proteins"/>
    <property type="match status" value="1"/>
</dbReference>
<dbReference type="Gene3D" id="3.30.1490.120">
    <property type="entry name" value="RNA polymerase Rpb7-like, N-terminal domain"/>
    <property type="match status" value="1"/>
</dbReference>
<dbReference type="HAMAP" id="MF_00865">
    <property type="entry name" value="RNApol_arch_Rpo7"/>
    <property type="match status" value="1"/>
</dbReference>
<dbReference type="InterPro" id="IPR012340">
    <property type="entry name" value="NA-bd_OB-fold"/>
</dbReference>
<dbReference type="InterPro" id="IPR036898">
    <property type="entry name" value="RNA_pol_Rpb7-like_N_sf"/>
</dbReference>
<dbReference type="InterPro" id="IPR004519">
    <property type="entry name" value="RNAP_E/RPC8"/>
</dbReference>
<dbReference type="InterPro" id="IPR046399">
    <property type="entry name" value="RNApol_Rpo7"/>
</dbReference>
<dbReference type="InterPro" id="IPR045113">
    <property type="entry name" value="Rpb7-like"/>
</dbReference>
<dbReference type="InterPro" id="IPR005576">
    <property type="entry name" value="Rpb7-like_N"/>
</dbReference>
<dbReference type="InterPro" id="IPR003029">
    <property type="entry name" value="S1_domain"/>
</dbReference>
<dbReference type="NCBIfam" id="NF006333">
    <property type="entry name" value="PRK08563.1"/>
    <property type="match status" value="1"/>
</dbReference>
<dbReference type="NCBIfam" id="TIGR00448">
    <property type="entry name" value="rpoE"/>
    <property type="match status" value="1"/>
</dbReference>
<dbReference type="PANTHER" id="PTHR12709:SF4">
    <property type="entry name" value="DNA-DIRECTED RNA POLYMERASE II SUBUNIT RPB7"/>
    <property type="match status" value="1"/>
</dbReference>
<dbReference type="PANTHER" id="PTHR12709">
    <property type="entry name" value="DNA-DIRECTED RNA POLYMERASE II, III"/>
    <property type="match status" value="1"/>
</dbReference>
<dbReference type="Pfam" id="PF00575">
    <property type="entry name" value="S1"/>
    <property type="match status" value="1"/>
</dbReference>
<dbReference type="Pfam" id="PF03876">
    <property type="entry name" value="SHS2_Rpb7-N"/>
    <property type="match status" value="1"/>
</dbReference>
<dbReference type="SMART" id="SM00316">
    <property type="entry name" value="S1"/>
    <property type="match status" value="1"/>
</dbReference>
<dbReference type="SUPFAM" id="SSF88798">
    <property type="entry name" value="N-terminal, heterodimerisation domain of RBP7 (RpoE)"/>
    <property type="match status" value="1"/>
</dbReference>
<dbReference type="SUPFAM" id="SSF50249">
    <property type="entry name" value="Nucleic acid-binding proteins"/>
    <property type="match status" value="1"/>
</dbReference>
<dbReference type="PROSITE" id="PS50126">
    <property type="entry name" value="S1"/>
    <property type="match status" value="1"/>
</dbReference>
<comment type="function">
    <text evidence="6 7 8">DNA-dependent RNA polymerase (RNAP) catalyzes the transcription of DNA into RNA using the four ribonucleoside triphosphates as substrates (Probable). The highly mobile Rpo4/Rpo7 heterodimer is conditionally required for transcription initiation (Probable).</text>
</comment>
<comment type="catalytic activity">
    <reaction evidence="1">
        <text>RNA(n) + a ribonucleoside 5'-triphosphate = RNA(n+1) + diphosphate</text>
        <dbReference type="Rhea" id="RHEA:21248"/>
        <dbReference type="Rhea" id="RHEA-COMP:14527"/>
        <dbReference type="Rhea" id="RHEA-COMP:17342"/>
        <dbReference type="ChEBI" id="CHEBI:33019"/>
        <dbReference type="ChEBI" id="CHEBI:61557"/>
        <dbReference type="ChEBI" id="CHEBI:140395"/>
        <dbReference type="EC" id="2.7.7.6"/>
    </reaction>
</comment>
<comment type="subunit">
    <text evidence="2 3 4">Part of the 13-subunit RNA polymerase complex. Forms a stalk with Rpo4 that extends from the main structure.</text>
</comment>
<comment type="subcellular location">
    <subcellularLocation>
        <location evidence="1">Cytoplasm</location>
    </subcellularLocation>
</comment>
<comment type="domain">
    <text evidence="1 2 3 4">Forms 2 domains with an elongated structure; Rpo4 packs into the hinge region between the 2 domains.</text>
</comment>
<comment type="similarity">
    <text evidence="1">Belongs to the eukaryotic RPB7/RPC8 RNA polymerase subunit family.</text>
</comment>
<sequence>MYKLIKARSIVRIPPNEFGKPLNEIALNELRQQYQEKILKDLGLVLAILNVKTSEEGMLVFGDGATYHEVEFDMITYVPVVQEVVEGEVLQVDNYGVFVNLGPMDGLVHISQITDDTLKYDNVRGIIFGEKSKKVIQKGDKVRARVISVASTVTGRLPRIALTMRQPYLGKLEWITQAKK</sequence>
<feature type="chain" id="PRO_0000453814" description="DNA-directed RNA polymerase subunit Rpo7">
    <location>
        <begin position="1"/>
        <end position="180"/>
    </location>
</feature>
<feature type="domain" description="S1 motif" evidence="1">
    <location>
        <begin position="82"/>
        <end position="165"/>
    </location>
</feature>
<feature type="strand" evidence="14">
    <location>
        <begin position="2"/>
        <end position="13"/>
    </location>
</feature>
<feature type="helix" evidence="14">
    <location>
        <begin position="15"/>
        <end position="17"/>
    </location>
</feature>
<feature type="helix" evidence="14">
    <location>
        <begin position="22"/>
        <end position="33"/>
    </location>
</feature>
<feature type="turn" evidence="14">
    <location>
        <begin position="34"/>
        <end position="36"/>
    </location>
</feature>
<feature type="strand" evidence="14">
    <location>
        <begin position="40"/>
        <end position="42"/>
    </location>
</feature>
<feature type="strand" evidence="14">
    <location>
        <begin position="44"/>
        <end position="53"/>
    </location>
</feature>
<feature type="strand" evidence="14">
    <location>
        <begin position="57"/>
        <end position="59"/>
    </location>
</feature>
<feature type="strand" evidence="14">
    <location>
        <begin position="64"/>
        <end position="77"/>
    </location>
</feature>
<feature type="strand" evidence="14">
    <location>
        <begin position="84"/>
        <end position="93"/>
    </location>
</feature>
<feature type="strand" evidence="14">
    <location>
        <begin position="96"/>
        <end position="100"/>
    </location>
</feature>
<feature type="strand" evidence="14">
    <location>
        <begin position="102"/>
        <end position="109"/>
    </location>
</feature>
<feature type="helix" evidence="14">
    <location>
        <begin position="110"/>
        <end position="112"/>
    </location>
</feature>
<feature type="strand" evidence="14">
    <location>
        <begin position="118"/>
        <end position="120"/>
    </location>
</feature>
<feature type="strand" evidence="14">
    <location>
        <begin position="122"/>
        <end position="124"/>
    </location>
</feature>
<feature type="strand" evidence="14">
    <location>
        <begin position="127"/>
        <end position="129"/>
    </location>
</feature>
<feature type="turn" evidence="14">
    <location>
        <begin position="130"/>
        <end position="132"/>
    </location>
</feature>
<feature type="strand" evidence="14">
    <location>
        <begin position="141"/>
        <end position="149"/>
    </location>
</feature>
<feature type="strand" evidence="14">
    <location>
        <begin position="160"/>
        <end position="163"/>
    </location>
</feature>
<feature type="helix" evidence="14">
    <location>
        <begin position="172"/>
        <end position="175"/>
    </location>
</feature>
<protein>
    <recommendedName>
        <fullName evidence="1 5">DNA-directed RNA polymerase subunit Rpo7</fullName>
        <ecNumber evidence="1">2.7.7.6</ecNumber>
    </recommendedName>
    <alternativeName>
        <fullName evidence="1">DNA-directed RNA polymerase subunit E</fullName>
    </alternativeName>
</protein>